<gene>
    <name type="ORF">CBG24265</name>
</gene>
<sequence>MSPWRCIAEQLVEYEEPVDAKAYFDKIICLWKEYPNAISNRINTSVPVEEESQVWNEVIANFESKYRFDPANSSELSIFKLIQRDYKRQSFSNNCYEVAFYEEELLVRFYPIVLDGQQHPHFESPYSIACKIPSNSSILLQFFKPVDTPDDHFEFLKTLAFKQLVTWLKSIDLSKTTRKTHSLLDKESYISTYRHIREDLGRPLVEGWTENSKPQKVIFEDCGIASYIQELITSGILPKPRKFVDIGCGNGLLVHLLNKIGIPGYGVDVRSRKVWKTTLSHVDLRESPVDPQIVVENRPHFDADVDLLIGNHSDELTPWIPVMAAKLNCNFFLIPCCPYNFFGKYLNNGSHLGPKRMTSQYESFFEWTVSVSERLGFDTKMDRLAIPSTKRLCIIGRVPEKGLCPSLEQTIEHMTQGQKFVARPREIRNNNCMHISVTDRERIAKKLFDFILNASDDVRDGWRCGGEVPLAQLAGQLTDDDKKLMKDQDGGLQTFLRNHHQIFHVFQATARLRDFRQPVVSRRQQTNPKKQEATNRPKQPCWMSLNHPDGCPLGPESCRYLH</sequence>
<reference key="1">
    <citation type="journal article" date="2003" name="PLoS Biol.">
        <title>The genome sequence of Caenorhabditis briggsae: a platform for comparative genomics.</title>
        <authorList>
            <person name="Stein L.D."/>
            <person name="Bao Z."/>
            <person name="Blasiar D."/>
            <person name="Blumenthal T."/>
            <person name="Brent M.R."/>
            <person name="Chen N."/>
            <person name="Chinwalla A."/>
            <person name="Clarke L."/>
            <person name="Clee C."/>
            <person name="Coghlan A."/>
            <person name="Coulson A."/>
            <person name="D'Eustachio P."/>
            <person name="Fitch D.H.A."/>
            <person name="Fulton L.A."/>
            <person name="Fulton R.E."/>
            <person name="Griffiths-Jones S."/>
            <person name="Harris T.W."/>
            <person name="Hillier L.W."/>
            <person name="Kamath R."/>
            <person name="Kuwabara P.E."/>
            <person name="Mardis E.R."/>
            <person name="Marra M.A."/>
            <person name="Miner T.L."/>
            <person name="Minx P."/>
            <person name="Mullikin J.C."/>
            <person name="Plumb R.W."/>
            <person name="Rogers J."/>
            <person name="Schein J.E."/>
            <person name="Sohrmann M."/>
            <person name="Spieth J."/>
            <person name="Stajich J.E."/>
            <person name="Wei C."/>
            <person name="Willey D."/>
            <person name="Wilson R.K."/>
            <person name="Durbin R.M."/>
            <person name="Waterston R.H."/>
        </authorList>
    </citation>
    <scope>NUCLEOTIDE SEQUENCE [LARGE SCALE GENOMIC DNA]</scope>
    <source>
        <strain>AF16</strain>
    </source>
</reference>
<protein>
    <recommendedName>
        <fullName>Probable tRNA (uracil-O(2)-)-methyltransferase</fullName>
        <ecNumber>2.1.1.211</ecNumber>
    </recommendedName>
</protein>
<comment type="function">
    <text evidence="1">Probable adenosyl-L-methionine (AdoMet)-dependent tRNA (uracil-O(2)-)-methyltransferase.</text>
</comment>
<comment type="catalytic activity">
    <reaction>
        <text>uridine(44) in tRNA(Ser) + S-adenosyl-L-methionine = 2'-O-methyluridine(44) in tRNA(Ser) + S-adenosyl-L-homocysteine + H(+)</text>
        <dbReference type="Rhea" id="RHEA:43100"/>
        <dbReference type="Rhea" id="RHEA-COMP:10339"/>
        <dbReference type="Rhea" id="RHEA-COMP:10340"/>
        <dbReference type="ChEBI" id="CHEBI:15378"/>
        <dbReference type="ChEBI" id="CHEBI:57856"/>
        <dbReference type="ChEBI" id="CHEBI:59789"/>
        <dbReference type="ChEBI" id="CHEBI:65315"/>
        <dbReference type="ChEBI" id="CHEBI:74478"/>
        <dbReference type="EC" id="2.1.1.211"/>
    </reaction>
</comment>
<comment type="subcellular location">
    <subcellularLocation>
        <location evidence="4">Cytoplasm</location>
    </subcellularLocation>
</comment>
<comment type="similarity">
    <text evidence="4">Belongs to the TRM44 family.</text>
</comment>
<evidence type="ECO:0000250" key="1"/>
<evidence type="ECO:0000255" key="2">
    <source>
        <dbReference type="PROSITE-ProRule" id="PRU00723"/>
    </source>
</evidence>
<evidence type="ECO:0000256" key="3">
    <source>
        <dbReference type="SAM" id="MobiDB-lite"/>
    </source>
</evidence>
<evidence type="ECO:0000305" key="4"/>
<name>TRM44_CAEBR</name>
<keyword id="KW-0963">Cytoplasm</keyword>
<keyword id="KW-0479">Metal-binding</keyword>
<keyword id="KW-0489">Methyltransferase</keyword>
<keyword id="KW-1185">Reference proteome</keyword>
<keyword id="KW-0949">S-adenosyl-L-methionine</keyword>
<keyword id="KW-0808">Transferase</keyword>
<keyword id="KW-0819">tRNA processing</keyword>
<keyword id="KW-0862">Zinc</keyword>
<keyword id="KW-0863">Zinc-finger</keyword>
<accession>Q60K16</accession>
<accession>A8WKC3</accession>
<feature type="chain" id="PRO_0000249897" description="Probable tRNA (uracil-O(2)-)-methyltransferase">
    <location>
        <begin position="1"/>
        <end position="562"/>
    </location>
</feature>
<feature type="zinc finger region" description="C3H1-type" evidence="2">
    <location>
        <begin position="535"/>
        <end position="562"/>
    </location>
</feature>
<feature type="region of interest" description="Disordered" evidence="3">
    <location>
        <begin position="520"/>
        <end position="546"/>
    </location>
</feature>
<dbReference type="EC" id="2.1.1.211"/>
<dbReference type="EMBL" id="HE601461">
    <property type="protein sequence ID" value="CAP20917.1"/>
    <property type="molecule type" value="Genomic_DNA"/>
</dbReference>
<dbReference type="RefSeq" id="XP_002648179.1">
    <property type="nucleotide sequence ID" value="XM_002648133.1"/>
</dbReference>
<dbReference type="STRING" id="6238.Q60K16"/>
<dbReference type="EnsemblMetazoa" id="CBG24265.1">
    <property type="protein sequence ID" value="CBG24265.1"/>
    <property type="gene ID" value="WBGene00042420"/>
</dbReference>
<dbReference type="GeneID" id="8590182"/>
<dbReference type="KEGG" id="cbr:CBG_24265"/>
<dbReference type="CTD" id="8590182"/>
<dbReference type="WormBase" id="CBG24265">
    <property type="protein sequence ID" value="CBP12807"/>
    <property type="gene ID" value="WBGene00042420"/>
</dbReference>
<dbReference type="eggNOG" id="KOG3790">
    <property type="taxonomic scope" value="Eukaryota"/>
</dbReference>
<dbReference type="HOGENOM" id="CLU_021025_0_0_1"/>
<dbReference type="OMA" id="CFFKLHH"/>
<dbReference type="Proteomes" id="UP000008549">
    <property type="component" value="Unassembled WGS sequence"/>
</dbReference>
<dbReference type="GO" id="GO:0005737">
    <property type="term" value="C:cytoplasm"/>
    <property type="evidence" value="ECO:0007669"/>
    <property type="project" value="UniProtKB-SubCell"/>
</dbReference>
<dbReference type="GO" id="GO:0016300">
    <property type="term" value="F:tRNA (uridine) methyltransferase activity"/>
    <property type="evidence" value="ECO:0000318"/>
    <property type="project" value="GO_Central"/>
</dbReference>
<dbReference type="GO" id="GO:0141101">
    <property type="term" value="F:tRNA(Ser) (uridine(44)-2'-O-)-methyltransferase activity"/>
    <property type="evidence" value="ECO:0007669"/>
    <property type="project" value="UniProtKB-EC"/>
</dbReference>
<dbReference type="GO" id="GO:0008270">
    <property type="term" value="F:zinc ion binding"/>
    <property type="evidence" value="ECO:0007669"/>
    <property type="project" value="UniProtKB-KW"/>
</dbReference>
<dbReference type="GO" id="GO:0030488">
    <property type="term" value="P:tRNA methylation"/>
    <property type="evidence" value="ECO:0000318"/>
    <property type="project" value="GO_Central"/>
</dbReference>
<dbReference type="Gene3D" id="3.40.50.150">
    <property type="entry name" value="Vaccinia Virus protein VP39"/>
    <property type="match status" value="1"/>
</dbReference>
<dbReference type="InterPro" id="IPR029063">
    <property type="entry name" value="SAM-dependent_MTases_sf"/>
</dbReference>
<dbReference type="InterPro" id="IPR011671">
    <property type="entry name" value="tRNA_uracil_MeTrfase"/>
</dbReference>
<dbReference type="InterPro" id="IPR000571">
    <property type="entry name" value="Znf_CCCH"/>
</dbReference>
<dbReference type="PANTHER" id="PTHR21210">
    <property type="entry name" value="TRNA (URACIL-O(2)-)-METHYLTRANSFERASE-RELATED"/>
    <property type="match status" value="1"/>
</dbReference>
<dbReference type="PANTHER" id="PTHR21210:SF0">
    <property type="entry name" value="TRNA (URACIL-O(2)-)-METHYLTRANSFERASE-RELATED"/>
    <property type="match status" value="1"/>
</dbReference>
<dbReference type="Pfam" id="PF07757">
    <property type="entry name" value="AdoMet_MTase"/>
    <property type="match status" value="1"/>
</dbReference>
<dbReference type="SUPFAM" id="SSF53335">
    <property type="entry name" value="S-adenosyl-L-methionine-dependent methyltransferases"/>
    <property type="match status" value="1"/>
</dbReference>
<dbReference type="PROSITE" id="PS50103">
    <property type="entry name" value="ZF_C3H1"/>
    <property type="match status" value="1"/>
</dbReference>
<organism>
    <name type="scientific">Caenorhabditis briggsae</name>
    <dbReference type="NCBI Taxonomy" id="6238"/>
    <lineage>
        <taxon>Eukaryota</taxon>
        <taxon>Metazoa</taxon>
        <taxon>Ecdysozoa</taxon>
        <taxon>Nematoda</taxon>
        <taxon>Chromadorea</taxon>
        <taxon>Rhabditida</taxon>
        <taxon>Rhabditina</taxon>
        <taxon>Rhabditomorpha</taxon>
        <taxon>Rhabditoidea</taxon>
        <taxon>Rhabditidae</taxon>
        <taxon>Peloderinae</taxon>
        <taxon>Caenorhabditis</taxon>
    </lineage>
</organism>
<proteinExistence type="inferred from homology"/>